<comment type="function">
    <text evidence="1">Involved in the import of serine and threonine into the cell, with the concomitant import of sodium (symport system).</text>
</comment>
<comment type="catalytic activity">
    <reaction evidence="1">
        <text>L-serine(in) + Na(+)(in) = L-serine(out) + Na(+)(out)</text>
        <dbReference type="Rhea" id="RHEA:29575"/>
        <dbReference type="ChEBI" id="CHEBI:29101"/>
        <dbReference type="ChEBI" id="CHEBI:33384"/>
    </reaction>
    <physiologicalReaction direction="right-to-left" evidence="1">
        <dbReference type="Rhea" id="RHEA:29577"/>
    </physiologicalReaction>
</comment>
<comment type="catalytic activity">
    <reaction evidence="1">
        <text>L-threonine(in) + Na(+)(in) = L-threonine(out) + Na(+)(out)</text>
        <dbReference type="Rhea" id="RHEA:69999"/>
        <dbReference type="ChEBI" id="CHEBI:29101"/>
        <dbReference type="ChEBI" id="CHEBI:57926"/>
    </reaction>
    <physiologicalReaction direction="right-to-left" evidence="1">
        <dbReference type="Rhea" id="RHEA:70001"/>
    </physiologicalReaction>
</comment>
<comment type="subcellular location">
    <subcellularLocation>
        <location evidence="1">Cell inner membrane</location>
        <topology evidence="1">Multi-pass membrane protein</topology>
    </subcellularLocation>
</comment>
<comment type="similarity">
    <text evidence="1">Belongs to the dicarboxylate/amino acid:cation symporter (DAACS) (TC 2.A.23) family.</text>
</comment>
<organism>
    <name type="scientific">Erwinia tasmaniensis (strain DSM 17950 / CFBP 7177 / CIP 109463 / NCPPB 4357 / Et1/99)</name>
    <dbReference type="NCBI Taxonomy" id="465817"/>
    <lineage>
        <taxon>Bacteria</taxon>
        <taxon>Pseudomonadati</taxon>
        <taxon>Pseudomonadota</taxon>
        <taxon>Gammaproteobacteria</taxon>
        <taxon>Enterobacterales</taxon>
        <taxon>Erwiniaceae</taxon>
        <taxon>Erwinia</taxon>
    </lineage>
</organism>
<proteinExistence type="inferred from homology"/>
<name>SSTT_ERWT9</name>
<evidence type="ECO:0000255" key="1">
    <source>
        <dbReference type="HAMAP-Rule" id="MF_01582"/>
    </source>
</evidence>
<gene>
    <name evidence="1" type="primary">sstT</name>
    <name type="ordered locus">ETA_29050</name>
</gene>
<reference key="1">
    <citation type="journal article" date="2008" name="Environ. Microbiol.">
        <title>The genome of Erwinia tasmaniensis strain Et1/99, a non-pathogenic bacterium in the genus Erwinia.</title>
        <authorList>
            <person name="Kube M."/>
            <person name="Migdoll A.M."/>
            <person name="Mueller I."/>
            <person name="Kuhl H."/>
            <person name="Beck A."/>
            <person name="Reinhardt R."/>
            <person name="Geider K."/>
        </authorList>
    </citation>
    <scope>NUCLEOTIDE SEQUENCE [LARGE SCALE GENOMIC DNA]</scope>
    <source>
        <strain>DSM 17950 / CFBP 7177 / CIP 109463 / NCPPB 4357 / Et1/99</strain>
    </source>
</reference>
<dbReference type="EMBL" id="CU468135">
    <property type="protein sequence ID" value="CAO97951.1"/>
    <property type="molecule type" value="Genomic_DNA"/>
</dbReference>
<dbReference type="RefSeq" id="WP_012442605.1">
    <property type="nucleotide sequence ID" value="NC_010694.1"/>
</dbReference>
<dbReference type="SMR" id="B2VDB2"/>
<dbReference type="STRING" id="465817.ETA_29050"/>
<dbReference type="KEGG" id="eta:ETA_29050"/>
<dbReference type="eggNOG" id="COG3633">
    <property type="taxonomic scope" value="Bacteria"/>
</dbReference>
<dbReference type="HOGENOM" id="CLU_044581_0_0_6"/>
<dbReference type="OrthoDB" id="9768885at2"/>
<dbReference type="Proteomes" id="UP000001726">
    <property type="component" value="Chromosome"/>
</dbReference>
<dbReference type="GO" id="GO:0005886">
    <property type="term" value="C:plasma membrane"/>
    <property type="evidence" value="ECO:0007669"/>
    <property type="project" value="UniProtKB-SubCell"/>
</dbReference>
<dbReference type="GO" id="GO:0005295">
    <property type="term" value="F:neutral L-amino acid:sodium symporter activity"/>
    <property type="evidence" value="ECO:0007669"/>
    <property type="project" value="TreeGrafter"/>
</dbReference>
<dbReference type="GO" id="GO:0032329">
    <property type="term" value="P:serine transport"/>
    <property type="evidence" value="ECO:0007669"/>
    <property type="project" value="InterPro"/>
</dbReference>
<dbReference type="GO" id="GO:0015826">
    <property type="term" value="P:threonine transport"/>
    <property type="evidence" value="ECO:0007669"/>
    <property type="project" value="InterPro"/>
</dbReference>
<dbReference type="FunFam" id="1.10.3860.10:FF:000003">
    <property type="entry name" value="Serine/threonine transporter sstT"/>
    <property type="match status" value="1"/>
</dbReference>
<dbReference type="Gene3D" id="1.10.3860.10">
    <property type="entry name" value="Sodium:dicarboxylate symporter"/>
    <property type="match status" value="1"/>
</dbReference>
<dbReference type="HAMAP" id="MF_01582">
    <property type="entry name" value="Ser_Thr_transp_SstT"/>
    <property type="match status" value="1"/>
</dbReference>
<dbReference type="InterPro" id="IPR001991">
    <property type="entry name" value="Na-dicarboxylate_symporter"/>
</dbReference>
<dbReference type="InterPro" id="IPR036458">
    <property type="entry name" value="Na:dicarbo_symporter_sf"/>
</dbReference>
<dbReference type="InterPro" id="IPR023025">
    <property type="entry name" value="Ser_Thr_transp_SstT"/>
</dbReference>
<dbReference type="NCBIfam" id="NF010151">
    <property type="entry name" value="PRK13628.1"/>
    <property type="match status" value="1"/>
</dbReference>
<dbReference type="PANTHER" id="PTHR42865">
    <property type="entry name" value="PROTON/GLUTAMATE-ASPARTATE SYMPORTER"/>
    <property type="match status" value="1"/>
</dbReference>
<dbReference type="PANTHER" id="PTHR42865:SF8">
    <property type="entry name" value="SERINE_THREONINE TRANSPORTER SSTT"/>
    <property type="match status" value="1"/>
</dbReference>
<dbReference type="Pfam" id="PF00375">
    <property type="entry name" value="SDF"/>
    <property type="match status" value="1"/>
</dbReference>
<dbReference type="PRINTS" id="PR00173">
    <property type="entry name" value="EDTRNSPORT"/>
</dbReference>
<dbReference type="SUPFAM" id="SSF118215">
    <property type="entry name" value="Proton glutamate symport protein"/>
    <property type="match status" value="1"/>
</dbReference>
<sequence length="410" mass="43051">MSEEKSGLVQRLMQGSLVTQIMVGLVAGIALAWLSKSHALAVGLLGELFVNALKAVAPLLVLVLVISSIANHQQGQKTNIRPIVMLYLLSTFFAAVVAVVASHLLPQNLTLQNASSQIVPPSGILEVLHGLLMSMVTNPIEAVMKANYIGILVWAIGLGFAFRHSSEGTRTFLNDASDAVTRLVRIVIRFAPVGIFGLVASILASTGFDALGQYASLLGLLLGCMLLMALVFNPLLVWWQIRRNPYPLVFTCLRESGVTAFFTRSSAANIPVNMALAKKLGLDEDTYTVSIPIGANISMAGASITITVLTLAAVHTLGIQIDVGSAILLSLVASVCACGASGVAGGSLLLIPVACNMFGIPNEIAMQVVAVGFIIGVLQDSAETALNSSADILFTAAACMAEDRRLEQNA</sequence>
<accession>B2VDB2</accession>
<feature type="chain" id="PRO_1000215620" description="Serine/threonine transporter SstT">
    <location>
        <begin position="1"/>
        <end position="410"/>
    </location>
</feature>
<feature type="transmembrane region" description="Helical" evidence="1">
    <location>
        <begin position="15"/>
        <end position="35"/>
    </location>
</feature>
<feature type="transmembrane region" description="Helical" evidence="1">
    <location>
        <begin position="49"/>
        <end position="69"/>
    </location>
</feature>
<feature type="transmembrane region" description="Helical" evidence="1">
    <location>
        <begin position="82"/>
        <end position="102"/>
    </location>
</feature>
<feature type="transmembrane region" description="Helical" evidence="1">
    <location>
        <begin position="118"/>
        <end position="138"/>
    </location>
</feature>
<feature type="transmembrane region" description="Helical" evidence="1">
    <location>
        <begin position="142"/>
        <end position="162"/>
    </location>
</feature>
<feature type="transmembrane region" description="Helical" evidence="1">
    <location>
        <begin position="190"/>
        <end position="210"/>
    </location>
</feature>
<feature type="transmembrane region" description="Helical" evidence="1">
    <location>
        <begin position="217"/>
        <end position="237"/>
    </location>
</feature>
<feature type="transmembrane region" description="Helical" evidence="1">
    <location>
        <begin position="299"/>
        <end position="319"/>
    </location>
</feature>
<feature type="transmembrane region" description="Helical" evidence="1">
    <location>
        <begin position="331"/>
        <end position="351"/>
    </location>
</feature>
<feature type="transmembrane region" description="Helical" evidence="1">
    <location>
        <begin position="358"/>
        <end position="378"/>
    </location>
</feature>
<protein>
    <recommendedName>
        <fullName evidence="1">Serine/threonine transporter SstT</fullName>
    </recommendedName>
    <alternativeName>
        <fullName evidence="1">Na(+)/serine-threonine symporter</fullName>
    </alternativeName>
</protein>
<keyword id="KW-0029">Amino-acid transport</keyword>
<keyword id="KW-0997">Cell inner membrane</keyword>
<keyword id="KW-1003">Cell membrane</keyword>
<keyword id="KW-0472">Membrane</keyword>
<keyword id="KW-1185">Reference proteome</keyword>
<keyword id="KW-0769">Symport</keyword>
<keyword id="KW-0812">Transmembrane</keyword>
<keyword id="KW-1133">Transmembrane helix</keyword>
<keyword id="KW-0813">Transport</keyword>